<accession>B7MB69</accession>
<name>YRAN_ECO45</name>
<evidence type="ECO:0000255" key="1">
    <source>
        <dbReference type="HAMAP-Rule" id="MF_00048"/>
    </source>
</evidence>
<evidence type="ECO:0000256" key="2">
    <source>
        <dbReference type="SAM" id="MobiDB-lite"/>
    </source>
</evidence>
<feature type="chain" id="PRO_1000200142" description="UPF0102 protein YraN">
    <location>
        <begin position="1"/>
        <end position="131"/>
    </location>
</feature>
<feature type="region of interest" description="Disordered" evidence="2">
    <location>
        <begin position="1"/>
        <end position="21"/>
    </location>
</feature>
<feature type="compositionally biased region" description="Polar residues" evidence="2">
    <location>
        <begin position="1"/>
        <end position="19"/>
    </location>
</feature>
<sequence length="131" mass="14798">MATVPTRSGSPRQLTTKQTGDAWEAQARRWLEGKGLRFIAANVNERGGEIDLIMREGRTTVFIEVRYRRSALYGGAAASVTRSKQHKLLQTARLWLARHNGSFDTVDCRFDVVAFTGNEVEWIKDAFNDHS</sequence>
<dbReference type="EMBL" id="CU928161">
    <property type="protein sequence ID" value="CAR04760.1"/>
    <property type="molecule type" value="Genomic_DNA"/>
</dbReference>
<dbReference type="RefSeq" id="WP_000246833.1">
    <property type="nucleotide sequence ID" value="NC_011742.1"/>
</dbReference>
<dbReference type="SMR" id="B7MB69"/>
<dbReference type="KEGG" id="ecz:ECS88_3532"/>
<dbReference type="HOGENOM" id="CLU_115353_1_0_6"/>
<dbReference type="Proteomes" id="UP000000747">
    <property type="component" value="Chromosome"/>
</dbReference>
<dbReference type="GO" id="GO:0003676">
    <property type="term" value="F:nucleic acid binding"/>
    <property type="evidence" value="ECO:0007669"/>
    <property type="project" value="InterPro"/>
</dbReference>
<dbReference type="CDD" id="cd20736">
    <property type="entry name" value="PoNe_Nuclease"/>
    <property type="match status" value="1"/>
</dbReference>
<dbReference type="Gene3D" id="3.40.1350.10">
    <property type="match status" value="1"/>
</dbReference>
<dbReference type="HAMAP" id="MF_00048">
    <property type="entry name" value="UPF0102"/>
    <property type="match status" value="1"/>
</dbReference>
<dbReference type="InterPro" id="IPR011335">
    <property type="entry name" value="Restrct_endonuc-II-like"/>
</dbReference>
<dbReference type="InterPro" id="IPR011856">
    <property type="entry name" value="tRNA_endonuc-like_dom_sf"/>
</dbReference>
<dbReference type="InterPro" id="IPR003509">
    <property type="entry name" value="UPF0102_YraN-like"/>
</dbReference>
<dbReference type="NCBIfam" id="NF009150">
    <property type="entry name" value="PRK12497.1-3"/>
    <property type="match status" value="1"/>
</dbReference>
<dbReference type="NCBIfam" id="TIGR00252">
    <property type="entry name" value="YraN family protein"/>
    <property type="match status" value="1"/>
</dbReference>
<dbReference type="PANTHER" id="PTHR34039">
    <property type="entry name" value="UPF0102 PROTEIN YRAN"/>
    <property type="match status" value="1"/>
</dbReference>
<dbReference type="PANTHER" id="PTHR34039:SF1">
    <property type="entry name" value="UPF0102 PROTEIN YRAN"/>
    <property type="match status" value="1"/>
</dbReference>
<dbReference type="Pfam" id="PF02021">
    <property type="entry name" value="UPF0102"/>
    <property type="match status" value="1"/>
</dbReference>
<dbReference type="SUPFAM" id="SSF52980">
    <property type="entry name" value="Restriction endonuclease-like"/>
    <property type="match status" value="1"/>
</dbReference>
<organism>
    <name type="scientific">Escherichia coli O45:K1 (strain S88 / ExPEC)</name>
    <dbReference type="NCBI Taxonomy" id="585035"/>
    <lineage>
        <taxon>Bacteria</taxon>
        <taxon>Pseudomonadati</taxon>
        <taxon>Pseudomonadota</taxon>
        <taxon>Gammaproteobacteria</taxon>
        <taxon>Enterobacterales</taxon>
        <taxon>Enterobacteriaceae</taxon>
        <taxon>Escherichia</taxon>
    </lineage>
</organism>
<protein>
    <recommendedName>
        <fullName evidence="1">UPF0102 protein YraN</fullName>
    </recommendedName>
</protein>
<gene>
    <name evidence="1" type="primary">yraN</name>
    <name type="ordered locus">ECS88_3532</name>
</gene>
<comment type="similarity">
    <text evidence="1">Belongs to the UPF0102 family.</text>
</comment>
<keyword id="KW-1185">Reference proteome</keyword>
<proteinExistence type="inferred from homology"/>
<reference key="1">
    <citation type="journal article" date="2009" name="PLoS Genet.">
        <title>Organised genome dynamics in the Escherichia coli species results in highly diverse adaptive paths.</title>
        <authorList>
            <person name="Touchon M."/>
            <person name="Hoede C."/>
            <person name="Tenaillon O."/>
            <person name="Barbe V."/>
            <person name="Baeriswyl S."/>
            <person name="Bidet P."/>
            <person name="Bingen E."/>
            <person name="Bonacorsi S."/>
            <person name="Bouchier C."/>
            <person name="Bouvet O."/>
            <person name="Calteau A."/>
            <person name="Chiapello H."/>
            <person name="Clermont O."/>
            <person name="Cruveiller S."/>
            <person name="Danchin A."/>
            <person name="Diard M."/>
            <person name="Dossat C."/>
            <person name="Karoui M.E."/>
            <person name="Frapy E."/>
            <person name="Garry L."/>
            <person name="Ghigo J.M."/>
            <person name="Gilles A.M."/>
            <person name="Johnson J."/>
            <person name="Le Bouguenec C."/>
            <person name="Lescat M."/>
            <person name="Mangenot S."/>
            <person name="Martinez-Jehanne V."/>
            <person name="Matic I."/>
            <person name="Nassif X."/>
            <person name="Oztas S."/>
            <person name="Petit M.A."/>
            <person name="Pichon C."/>
            <person name="Rouy Z."/>
            <person name="Ruf C.S."/>
            <person name="Schneider D."/>
            <person name="Tourret J."/>
            <person name="Vacherie B."/>
            <person name="Vallenet D."/>
            <person name="Medigue C."/>
            <person name="Rocha E.P.C."/>
            <person name="Denamur E."/>
        </authorList>
    </citation>
    <scope>NUCLEOTIDE SEQUENCE [LARGE SCALE GENOMIC DNA]</scope>
    <source>
        <strain>S88 / ExPEC</strain>
    </source>
</reference>